<reference key="1">
    <citation type="journal article" date="2006" name="J. Bacteriol.">
        <title>Pathogenomic sequence analysis of Bacillus cereus and Bacillus thuringiensis isolates closely related to Bacillus anthracis.</title>
        <authorList>
            <person name="Han C.S."/>
            <person name="Xie G."/>
            <person name="Challacombe J.F."/>
            <person name="Altherr M.R."/>
            <person name="Bhotika S.S."/>
            <person name="Bruce D."/>
            <person name="Campbell C.S."/>
            <person name="Campbell M.L."/>
            <person name="Chen J."/>
            <person name="Chertkov O."/>
            <person name="Cleland C."/>
            <person name="Dimitrijevic M."/>
            <person name="Doggett N.A."/>
            <person name="Fawcett J.J."/>
            <person name="Glavina T."/>
            <person name="Goodwin L.A."/>
            <person name="Hill K.K."/>
            <person name="Hitchcock P."/>
            <person name="Jackson P.J."/>
            <person name="Keim P."/>
            <person name="Kewalramani A.R."/>
            <person name="Longmire J."/>
            <person name="Lucas S."/>
            <person name="Malfatti S."/>
            <person name="McMurry K."/>
            <person name="Meincke L.J."/>
            <person name="Misra M."/>
            <person name="Moseman B.L."/>
            <person name="Mundt M."/>
            <person name="Munk A.C."/>
            <person name="Okinaka R.T."/>
            <person name="Parson-Quintana B."/>
            <person name="Reilly L.P."/>
            <person name="Richardson P."/>
            <person name="Robinson D.L."/>
            <person name="Rubin E."/>
            <person name="Saunders E."/>
            <person name="Tapia R."/>
            <person name="Tesmer J.G."/>
            <person name="Thayer N."/>
            <person name="Thompson L.S."/>
            <person name="Tice H."/>
            <person name="Ticknor L.O."/>
            <person name="Wills P.L."/>
            <person name="Brettin T.S."/>
            <person name="Gilna P."/>
        </authorList>
    </citation>
    <scope>NUCLEOTIDE SEQUENCE [LARGE SCALE GENOMIC DNA]</scope>
    <source>
        <strain>97-27</strain>
    </source>
</reference>
<sequence length="370" mass="41603">MRVKEQLLTLRAYVPGKNIEEVKREYGLSKIVKLASNENPFGCSARVTEALTSLASQYALYPDGHAFELRTKVAKHLGVKAEQLLFGSGLDEVIQMISRALLHEGTNVVMANPTFSQYHHHAVIEGAEVREVSLKDGIHDLDAMLQQVDDQTKIVWICNPNNPTGTYVEKQKLLSFLESVPKSALVIMDEAYYEYAGAEDYPQTLPLLEKYENLMVLRTFSKAYGLAAFRIGYAVGNTELIGQLEVARLPFNTSTVAQSVALAALEDQAFLQECVKKNEEGLHQYYAFCKEYNVFYYPSQTNFIFLKLGIPGNEAFERLMKKGYIVRSGAAFGIDDGIRITVGLKEENDEIIELLKELVNEQVQKEETYS</sequence>
<name>HIS81_BACHK</name>
<feature type="chain" id="PRO_0000153310" description="Histidinol-phosphate aminotransferase 1">
    <location>
        <begin position="1"/>
        <end position="370"/>
    </location>
</feature>
<feature type="modified residue" description="N6-(pyridoxal phosphate)lysine" evidence="1">
    <location>
        <position position="222"/>
    </location>
</feature>
<organism>
    <name type="scientific">Bacillus thuringiensis subsp. konkukian (strain 97-27)</name>
    <dbReference type="NCBI Taxonomy" id="281309"/>
    <lineage>
        <taxon>Bacteria</taxon>
        <taxon>Bacillati</taxon>
        <taxon>Bacillota</taxon>
        <taxon>Bacilli</taxon>
        <taxon>Bacillales</taxon>
        <taxon>Bacillaceae</taxon>
        <taxon>Bacillus</taxon>
        <taxon>Bacillus cereus group</taxon>
    </lineage>
</organism>
<protein>
    <recommendedName>
        <fullName evidence="1">Histidinol-phosphate aminotransferase 1</fullName>
        <ecNumber evidence="1">2.6.1.9</ecNumber>
    </recommendedName>
    <alternativeName>
        <fullName evidence="1">Imidazole acetol-phosphate transaminase 1</fullName>
    </alternativeName>
</protein>
<accession>Q6HL37</accession>
<evidence type="ECO:0000255" key="1">
    <source>
        <dbReference type="HAMAP-Rule" id="MF_01023"/>
    </source>
</evidence>
<keyword id="KW-0028">Amino-acid biosynthesis</keyword>
<keyword id="KW-0032">Aminotransferase</keyword>
<keyword id="KW-0368">Histidine biosynthesis</keyword>
<keyword id="KW-0663">Pyridoxal phosphate</keyword>
<keyword id="KW-0808">Transferase</keyword>
<gene>
    <name evidence="1" type="primary">hisC1</name>
    <name type="ordered locus">BT9727_1400</name>
</gene>
<comment type="catalytic activity">
    <reaction evidence="1">
        <text>L-histidinol phosphate + 2-oxoglutarate = 3-(imidazol-4-yl)-2-oxopropyl phosphate + L-glutamate</text>
        <dbReference type="Rhea" id="RHEA:23744"/>
        <dbReference type="ChEBI" id="CHEBI:16810"/>
        <dbReference type="ChEBI" id="CHEBI:29985"/>
        <dbReference type="ChEBI" id="CHEBI:57766"/>
        <dbReference type="ChEBI" id="CHEBI:57980"/>
        <dbReference type="EC" id="2.6.1.9"/>
    </reaction>
</comment>
<comment type="cofactor">
    <cofactor evidence="1">
        <name>pyridoxal 5'-phosphate</name>
        <dbReference type="ChEBI" id="CHEBI:597326"/>
    </cofactor>
</comment>
<comment type="pathway">
    <text evidence="1">Amino-acid biosynthesis; L-histidine biosynthesis; L-histidine from 5-phospho-alpha-D-ribose 1-diphosphate: step 7/9.</text>
</comment>
<comment type="subunit">
    <text evidence="1">Homodimer.</text>
</comment>
<comment type="similarity">
    <text evidence="1">Belongs to the class-II pyridoxal-phosphate-dependent aminotransferase family. Histidinol-phosphate aminotransferase subfamily.</text>
</comment>
<dbReference type="EC" id="2.6.1.9" evidence="1"/>
<dbReference type="EMBL" id="AE017355">
    <property type="protein sequence ID" value="AAT59458.1"/>
    <property type="molecule type" value="Genomic_DNA"/>
</dbReference>
<dbReference type="RefSeq" id="YP_035734.1">
    <property type="nucleotide sequence ID" value="NC_005957.1"/>
</dbReference>
<dbReference type="SMR" id="Q6HL37"/>
<dbReference type="KEGG" id="btk:BT9727_1400"/>
<dbReference type="PATRIC" id="fig|281309.8.peg.1472"/>
<dbReference type="HOGENOM" id="CLU_017584_3_3_9"/>
<dbReference type="UniPathway" id="UPA00031">
    <property type="reaction ID" value="UER00012"/>
</dbReference>
<dbReference type="Proteomes" id="UP000001301">
    <property type="component" value="Chromosome"/>
</dbReference>
<dbReference type="GO" id="GO:0004400">
    <property type="term" value="F:histidinol-phosphate transaminase activity"/>
    <property type="evidence" value="ECO:0007669"/>
    <property type="project" value="UniProtKB-UniRule"/>
</dbReference>
<dbReference type="GO" id="GO:0030170">
    <property type="term" value="F:pyridoxal phosphate binding"/>
    <property type="evidence" value="ECO:0007669"/>
    <property type="project" value="InterPro"/>
</dbReference>
<dbReference type="GO" id="GO:0000105">
    <property type="term" value="P:L-histidine biosynthetic process"/>
    <property type="evidence" value="ECO:0007669"/>
    <property type="project" value="UniProtKB-UniRule"/>
</dbReference>
<dbReference type="CDD" id="cd00609">
    <property type="entry name" value="AAT_like"/>
    <property type="match status" value="1"/>
</dbReference>
<dbReference type="Gene3D" id="3.90.1150.10">
    <property type="entry name" value="Aspartate Aminotransferase, domain 1"/>
    <property type="match status" value="1"/>
</dbReference>
<dbReference type="Gene3D" id="3.40.640.10">
    <property type="entry name" value="Type I PLP-dependent aspartate aminotransferase-like (Major domain)"/>
    <property type="match status" value="1"/>
</dbReference>
<dbReference type="HAMAP" id="MF_01023">
    <property type="entry name" value="HisC_aminotrans_2"/>
    <property type="match status" value="1"/>
</dbReference>
<dbReference type="InterPro" id="IPR001917">
    <property type="entry name" value="Aminotrans_II_pyridoxalP_BS"/>
</dbReference>
<dbReference type="InterPro" id="IPR004839">
    <property type="entry name" value="Aminotransferase_I/II_large"/>
</dbReference>
<dbReference type="InterPro" id="IPR005861">
    <property type="entry name" value="HisP_aminotrans"/>
</dbReference>
<dbReference type="InterPro" id="IPR050106">
    <property type="entry name" value="HistidinolP_aminotransfase"/>
</dbReference>
<dbReference type="InterPro" id="IPR015424">
    <property type="entry name" value="PyrdxlP-dep_Trfase"/>
</dbReference>
<dbReference type="InterPro" id="IPR015421">
    <property type="entry name" value="PyrdxlP-dep_Trfase_major"/>
</dbReference>
<dbReference type="InterPro" id="IPR015422">
    <property type="entry name" value="PyrdxlP-dep_Trfase_small"/>
</dbReference>
<dbReference type="NCBIfam" id="TIGR01141">
    <property type="entry name" value="hisC"/>
    <property type="match status" value="1"/>
</dbReference>
<dbReference type="PANTHER" id="PTHR43643:SF3">
    <property type="entry name" value="HISTIDINOL-PHOSPHATE AMINOTRANSFERASE"/>
    <property type="match status" value="1"/>
</dbReference>
<dbReference type="PANTHER" id="PTHR43643">
    <property type="entry name" value="HISTIDINOL-PHOSPHATE AMINOTRANSFERASE 2"/>
    <property type="match status" value="1"/>
</dbReference>
<dbReference type="Pfam" id="PF00155">
    <property type="entry name" value="Aminotran_1_2"/>
    <property type="match status" value="1"/>
</dbReference>
<dbReference type="SUPFAM" id="SSF53383">
    <property type="entry name" value="PLP-dependent transferases"/>
    <property type="match status" value="1"/>
</dbReference>
<dbReference type="PROSITE" id="PS00599">
    <property type="entry name" value="AA_TRANSFER_CLASS_2"/>
    <property type="match status" value="1"/>
</dbReference>
<proteinExistence type="inferred from homology"/>